<dbReference type="EC" id="2.5.1.19" evidence="1"/>
<dbReference type="EMBL" id="CP000909">
    <property type="protein sequence ID" value="ABY33311.1"/>
    <property type="molecule type" value="Genomic_DNA"/>
</dbReference>
<dbReference type="RefSeq" id="WP_012255967.1">
    <property type="nucleotide sequence ID" value="NC_010175.1"/>
</dbReference>
<dbReference type="RefSeq" id="YP_001633700.1">
    <property type="nucleotide sequence ID" value="NC_010175.1"/>
</dbReference>
<dbReference type="SMR" id="A9WBA4"/>
<dbReference type="FunCoup" id="A9WBA4">
    <property type="interactions" value="364"/>
</dbReference>
<dbReference type="STRING" id="324602.Caur_0057"/>
<dbReference type="EnsemblBacteria" id="ABY33311">
    <property type="protein sequence ID" value="ABY33311"/>
    <property type="gene ID" value="Caur_0057"/>
</dbReference>
<dbReference type="KEGG" id="cau:Caur_0057"/>
<dbReference type="PATRIC" id="fig|324602.8.peg.63"/>
<dbReference type="eggNOG" id="COG0128">
    <property type="taxonomic scope" value="Bacteria"/>
</dbReference>
<dbReference type="HOGENOM" id="CLU_024321_0_1_0"/>
<dbReference type="InParanoid" id="A9WBA4"/>
<dbReference type="UniPathway" id="UPA00053">
    <property type="reaction ID" value="UER00089"/>
</dbReference>
<dbReference type="Proteomes" id="UP000002008">
    <property type="component" value="Chromosome"/>
</dbReference>
<dbReference type="GO" id="GO:0005737">
    <property type="term" value="C:cytoplasm"/>
    <property type="evidence" value="ECO:0007669"/>
    <property type="project" value="UniProtKB-SubCell"/>
</dbReference>
<dbReference type="GO" id="GO:0003866">
    <property type="term" value="F:3-phosphoshikimate 1-carboxyvinyltransferase activity"/>
    <property type="evidence" value="ECO:0000318"/>
    <property type="project" value="GO_Central"/>
</dbReference>
<dbReference type="GO" id="GO:0008652">
    <property type="term" value="P:amino acid biosynthetic process"/>
    <property type="evidence" value="ECO:0007669"/>
    <property type="project" value="UniProtKB-KW"/>
</dbReference>
<dbReference type="GO" id="GO:0009073">
    <property type="term" value="P:aromatic amino acid family biosynthetic process"/>
    <property type="evidence" value="ECO:0007669"/>
    <property type="project" value="UniProtKB-KW"/>
</dbReference>
<dbReference type="GO" id="GO:0009423">
    <property type="term" value="P:chorismate biosynthetic process"/>
    <property type="evidence" value="ECO:0000318"/>
    <property type="project" value="GO_Central"/>
</dbReference>
<dbReference type="CDD" id="cd01556">
    <property type="entry name" value="EPSP_synthase"/>
    <property type="match status" value="1"/>
</dbReference>
<dbReference type="FunFam" id="3.65.10.10:FF:000005">
    <property type="entry name" value="3-phosphoshikimate 1-carboxyvinyltransferase"/>
    <property type="match status" value="1"/>
</dbReference>
<dbReference type="FunFam" id="3.65.10.10:FF:000006">
    <property type="entry name" value="3-phosphoshikimate 1-carboxyvinyltransferase"/>
    <property type="match status" value="1"/>
</dbReference>
<dbReference type="Gene3D" id="3.65.10.10">
    <property type="entry name" value="Enolpyruvate transferase domain"/>
    <property type="match status" value="2"/>
</dbReference>
<dbReference type="HAMAP" id="MF_00210">
    <property type="entry name" value="EPSP_synth"/>
    <property type="match status" value="1"/>
</dbReference>
<dbReference type="InterPro" id="IPR001986">
    <property type="entry name" value="Enolpyruvate_Tfrase_dom"/>
</dbReference>
<dbReference type="InterPro" id="IPR036968">
    <property type="entry name" value="Enolpyruvate_Tfrase_sf"/>
</dbReference>
<dbReference type="InterPro" id="IPR006264">
    <property type="entry name" value="EPSP_synthase"/>
</dbReference>
<dbReference type="InterPro" id="IPR023193">
    <property type="entry name" value="EPSP_synthase_CS"/>
</dbReference>
<dbReference type="InterPro" id="IPR013792">
    <property type="entry name" value="RNA3'P_cycl/enolpyr_Trfase_a/b"/>
</dbReference>
<dbReference type="NCBIfam" id="TIGR01356">
    <property type="entry name" value="aroA"/>
    <property type="match status" value="1"/>
</dbReference>
<dbReference type="PANTHER" id="PTHR21090">
    <property type="entry name" value="AROM/DEHYDROQUINATE SYNTHASE"/>
    <property type="match status" value="1"/>
</dbReference>
<dbReference type="PANTHER" id="PTHR21090:SF5">
    <property type="entry name" value="PENTAFUNCTIONAL AROM POLYPEPTIDE"/>
    <property type="match status" value="1"/>
</dbReference>
<dbReference type="Pfam" id="PF00275">
    <property type="entry name" value="EPSP_synthase"/>
    <property type="match status" value="1"/>
</dbReference>
<dbReference type="PIRSF" id="PIRSF000505">
    <property type="entry name" value="EPSPS"/>
    <property type="match status" value="1"/>
</dbReference>
<dbReference type="SUPFAM" id="SSF55205">
    <property type="entry name" value="EPT/RTPC-like"/>
    <property type="match status" value="1"/>
</dbReference>
<dbReference type="PROSITE" id="PS00104">
    <property type="entry name" value="EPSP_SYNTHASE_1"/>
    <property type="match status" value="1"/>
</dbReference>
<dbReference type="PROSITE" id="PS00885">
    <property type="entry name" value="EPSP_SYNTHASE_2"/>
    <property type="match status" value="1"/>
</dbReference>
<gene>
    <name evidence="1" type="primary">aroA</name>
    <name type="ordered locus">Caur_0057</name>
</gene>
<accession>A9WBA4</accession>
<feature type="chain" id="PRO_1000077984" description="3-phosphoshikimate 1-carboxyvinyltransferase">
    <location>
        <begin position="1"/>
        <end position="435"/>
    </location>
</feature>
<feature type="active site" description="Proton acceptor" evidence="1">
    <location>
        <position position="319"/>
    </location>
</feature>
<feature type="binding site" evidence="1">
    <location>
        <position position="22"/>
    </location>
    <ligand>
        <name>3-phosphoshikimate</name>
        <dbReference type="ChEBI" id="CHEBI:145989"/>
    </ligand>
</feature>
<feature type="binding site" evidence="1">
    <location>
        <position position="22"/>
    </location>
    <ligand>
        <name>phosphoenolpyruvate</name>
        <dbReference type="ChEBI" id="CHEBI:58702"/>
    </ligand>
</feature>
<feature type="binding site" evidence="1">
    <location>
        <position position="23"/>
    </location>
    <ligand>
        <name>3-phosphoshikimate</name>
        <dbReference type="ChEBI" id="CHEBI:145989"/>
    </ligand>
</feature>
<feature type="binding site" evidence="1">
    <location>
        <position position="27"/>
    </location>
    <ligand>
        <name>3-phosphoshikimate</name>
        <dbReference type="ChEBI" id="CHEBI:145989"/>
    </ligand>
</feature>
<feature type="binding site" evidence="1">
    <location>
        <position position="95"/>
    </location>
    <ligand>
        <name>phosphoenolpyruvate</name>
        <dbReference type="ChEBI" id="CHEBI:58702"/>
    </ligand>
</feature>
<feature type="binding site" evidence="1">
    <location>
        <position position="123"/>
    </location>
    <ligand>
        <name>phosphoenolpyruvate</name>
        <dbReference type="ChEBI" id="CHEBI:58702"/>
    </ligand>
</feature>
<feature type="binding site" evidence="1">
    <location>
        <position position="168"/>
    </location>
    <ligand>
        <name>3-phosphoshikimate</name>
        <dbReference type="ChEBI" id="CHEBI:145989"/>
    </ligand>
</feature>
<feature type="binding site" evidence="1">
    <location>
        <position position="170"/>
    </location>
    <ligand>
        <name>3-phosphoshikimate</name>
        <dbReference type="ChEBI" id="CHEBI:145989"/>
    </ligand>
</feature>
<feature type="binding site" evidence="1">
    <location>
        <position position="170"/>
    </location>
    <ligand>
        <name>phosphoenolpyruvate</name>
        <dbReference type="ChEBI" id="CHEBI:58702"/>
    </ligand>
</feature>
<feature type="binding site" evidence="1">
    <location>
        <position position="319"/>
    </location>
    <ligand>
        <name>3-phosphoshikimate</name>
        <dbReference type="ChEBI" id="CHEBI:145989"/>
    </ligand>
</feature>
<feature type="binding site" evidence="1">
    <location>
        <position position="346"/>
    </location>
    <ligand>
        <name>3-phosphoshikimate</name>
        <dbReference type="ChEBI" id="CHEBI:145989"/>
    </ligand>
</feature>
<feature type="binding site" evidence="1">
    <location>
        <position position="350"/>
    </location>
    <ligand>
        <name>phosphoenolpyruvate</name>
        <dbReference type="ChEBI" id="CHEBI:58702"/>
    </ligand>
</feature>
<feature type="binding site" evidence="1">
    <location>
        <position position="393"/>
    </location>
    <ligand>
        <name>phosphoenolpyruvate</name>
        <dbReference type="ChEBI" id="CHEBI:58702"/>
    </ligand>
</feature>
<protein>
    <recommendedName>
        <fullName evidence="1">3-phosphoshikimate 1-carboxyvinyltransferase</fullName>
        <ecNumber evidence="1">2.5.1.19</ecNumber>
    </recommendedName>
    <alternativeName>
        <fullName evidence="1">5-enolpyruvylshikimate-3-phosphate synthase</fullName>
        <shortName evidence="1">EPSP synthase</shortName>
        <shortName evidence="1">EPSPS</shortName>
    </alternativeName>
</protein>
<comment type="function">
    <text evidence="1">Catalyzes the transfer of the enolpyruvyl moiety of phosphoenolpyruvate (PEP) to the 5-hydroxyl of shikimate-3-phosphate (S3P) to produce enolpyruvyl shikimate-3-phosphate and inorganic phosphate.</text>
</comment>
<comment type="catalytic activity">
    <reaction evidence="1">
        <text>3-phosphoshikimate + phosphoenolpyruvate = 5-O-(1-carboxyvinyl)-3-phosphoshikimate + phosphate</text>
        <dbReference type="Rhea" id="RHEA:21256"/>
        <dbReference type="ChEBI" id="CHEBI:43474"/>
        <dbReference type="ChEBI" id="CHEBI:57701"/>
        <dbReference type="ChEBI" id="CHEBI:58702"/>
        <dbReference type="ChEBI" id="CHEBI:145989"/>
        <dbReference type="EC" id="2.5.1.19"/>
    </reaction>
    <physiologicalReaction direction="left-to-right" evidence="1">
        <dbReference type="Rhea" id="RHEA:21257"/>
    </physiologicalReaction>
</comment>
<comment type="pathway">
    <text evidence="1">Metabolic intermediate biosynthesis; chorismate biosynthesis; chorismate from D-erythrose 4-phosphate and phosphoenolpyruvate: step 6/7.</text>
</comment>
<comment type="subunit">
    <text evidence="1">Monomer.</text>
</comment>
<comment type="subcellular location">
    <subcellularLocation>
        <location evidence="1">Cytoplasm</location>
    </subcellularLocation>
</comment>
<comment type="similarity">
    <text evidence="1">Belongs to the EPSP synthase family.</text>
</comment>
<organism>
    <name type="scientific">Chloroflexus aurantiacus (strain ATCC 29366 / DSM 635 / J-10-fl)</name>
    <dbReference type="NCBI Taxonomy" id="324602"/>
    <lineage>
        <taxon>Bacteria</taxon>
        <taxon>Bacillati</taxon>
        <taxon>Chloroflexota</taxon>
        <taxon>Chloroflexia</taxon>
        <taxon>Chloroflexales</taxon>
        <taxon>Chloroflexineae</taxon>
        <taxon>Chloroflexaceae</taxon>
        <taxon>Chloroflexus</taxon>
    </lineage>
</organism>
<evidence type="ECO:0000255" key="1">
    <source>
        <dbReference type="HAMAP-Rule" id="MF_00210"/>
    </source>
</evidence>
<name>AROA_CHLAA</name>
<sequence length="435" mass="45498">MKGITLTAPKRLRGVIEVPGDKSISHRSVLFNAIATGSAHITHFLPGADCLSTVACIRALGVTVEQPAERELIVHGVGLGGLREPADVLDCGNSGTTLRLLAGLLAGHPFFSVLTGDASLRSRPQRRIVVPLRAMGAQIDGRDDGDRAPLAIRGNRLRGGHYELSIASAQVKSALLLAALNAEQPLTLTGRIDSRDHTERMLAAMGLEITVTADQITIQPPSEATAPTALSLRVPGDPSSAAFWWVAAAIHPDAELVTPGVCLNPTRIGAIEVLQAMGADLTVMNERLEGSEPVGDVVVRSSSLRGTTIAGTLIPRLIDEIPVLAVAAACASGETVIRDAQELRAKETDRIATVAAGLSAMGAVVEPTADGMVIVGQPGQLQGTTLNSFHDHRLAMAWAIAAMVARGETTILEPAAAAVSYPEFWQTLAMVQEAA</sequence>
<reference key="1">
    <citation type="journal article" date="2011" name="BMC Genomics">
        <title>Complete genome sequence of the filamentous anoxygenic phototrophic bacterium Chloroflexus aurantiacus.</title>
        <authorList>
            <person name="Tang K.H."/>
            <person name="Barry K."/>
            <person name="Chertkov O."/>
            <person name="Dalin E."/>
            <person name="Han C.S."/>
            <person name="Hauser L.J."/>
            <person name="Honchak B.M."/>
            <person name="Karbach L.E."/>
            <person name="Land M.L."/>
            <person name="Lapidus A."/>
            <person name="Larimer F.W."/>
            <person name="Mikhailova N."/>
            <person name="Pitluck S."/>
            <person name="Pierson B.K."/>
            <person name="Blankenship R.E."/>
        </authorList>
    </citation>
    <scope>NUCLEOTIDE SEQUENCE [LARGE SCALE GENOMIC DNA]</scope>
    <source>
        <strain>ATCC 29366 / DSM 635 / J-10-fl</strain>
    </source>
</reference>
<keyword id="KW-0028">Amino-acid biosynthesis</keyword>
<keyword id="KW-0057">Aromatic amino acid biosynthesis</keyword>
<keyword id="KW-0963">Cytoplasm</keyword>
<keyword id="KW-1185">Reference proteome</keyword>
<keyword id="KW-0808">Transferase</keyword>
<proteinExistence type="inferred from homology"/>